<dbReference type="EMBL" id="BX571860">
    <property type="protein sequence ID" value="CAE12861.1"/>
    <property type="molecule type" value="Genomic_DNA"/>
</dbReference>
<dbReference type="RefSeq" id="WP_011144948.1">
    <property type="nucleotide sequence ID" value="NC_005126.1"/>
</dbReference>
<dbReference type="SMR" id="Q7N8Z3"/>
<dbReference type="STRING" id="243265.plu0566"/>
<dbReference type="GeneID" id="48846853"/>
<dbReference type="KEGG" id="plu:plu0566"/>
<dbReference type="eggNOG" id="COG3022">
    <property type="taxonomic scope" value="Bacteria"/>
</dbReference>
<dbReference type="HOGENOM" id="CLU_061989_0_0_6"/>
<dbReference type="OrthoDB" id="9777133at2"/>
<dbReference type="Proteomes" id="UP000002514">
    <property type="component" value="Chromosome"/>
</dbReference>
<dbReference type="GO" id="GO:0005829">
    <property type="term" value="C:cytosol"/>
    <property type="evidence" value="ECO:0007669"/>
    <property type="project" value="TreeGrafter"/>
</dbReference>
<dbReference type="GO" id="GO:0033194">
    <property type="term" value="P:response to hydroperoxide"/>
    <property type="evidence" value="ECO:0007669"/>
    <property type="project" value="TreeGrafter"/>
</dbReference>
<dbReference type="HAMAP" id="MF_00652">
    <property type="entry name" value="UPF0246"/>
    <property type="match status" value="1"/>
</dbReference>
<dbReference type="InterPro" id="IPR005583">
    <property type="entry name" value="YaaA"/>
</dbReference>
<dbReference type="NCBIfam" id="NF002541">
    <property type="entry name" value="PRK02101.1-1"/>
    <property type="match status" value="1"/>
</dbReference>
<dbReference type="NCBIfam" id="NF002542">
    <property type="entry name" value="PRK02101.1-3"/>
    <property type="match status" value="1"/>
</dbReference>
<dbReference type="PANTHER" id="PTHR30283:SF4">
    <property type="entry name" value="PEROXIDE STRESS RESISTANCE PROTEIN YAAA"/>
    <property type="match status" value="1"/>
</dbReference>
<dbReference type="PANTHER" id="PTHR30283">
    <property type="entry name" value="PEROXIDE STRESS RESPONSE PROTEIN YAAA"/>
    <property type="match status" value="1"/>
</dbReference>
<dbReference type="Pfam" id="PF03883">
    <property type="entry name" value="H2O2_YaaD"/>
    <property type="match status" value="1"/>
</dbReference>
<name>Y566_PHOLL</name>
<proteinExistence type="inferred from homology"/>
<feature type="chain" id="PRO_0000203993" description="UPF0246 protein plu0566">
    <location>
        <begin position="1"/>
        <end position="258"/>
    </location>
</feature>
<accession>Q7N8Z3</accession>
<comment type="similarity">
    <text evidence="1">Belongs to the UPF0246 family.</text>
</comment>
<keyword id="KW-1185">Reference proteome</keyword>
<sequence length="258" mass="29382">MLITISPAKTLDYESPLATEEYSQPELLDQSKRLIRICRELTPAQIASLMGISDKLAGLNAARFGEWHADFTPLNARQAILAFKGDVYTGMQAESFSNKDFDFAQNHLRILSGLYGVLRPLDLMQPYRLEMGIKLENKRGKDLYAFWGDLITEKLNEALEQQGDNVLVNLASDEYFKSVNTKKLAGKIIKPVFLDEKNGKYKIISFYAKKARGLMSQFIIQNQLTQIDRLVEFNLDGYAFDESLSKGNELVFKRPEQH</sequence>
<evidence type="ECO:0000255" key="1">
    <source>
        <dbReference type="HAMAP-Rule" id="MF_00652"/>
    </source>
</evidence>
<organism>
    <name type="scientific">Photorhabdus laumondii subsp. laumondii (strain DSM 15139 / CIP 105565 / TT01)</name>
    <name type="common">Photorhabdus luminescens subsp. laumondii</name>
    <dbReference type="NCBI Taxonomy" id="243265"/>
    <lineage>
        <taxon>Bacteria</taxon>
        <taxon>Pseudomonadati</taxon>
        <taxon>Pseudomonadota</taxon>
        <taxon>Gammaproteobacteria</taxon>
        <taxon>Enterobacterales</taxon>
        <taxon>Morganellaceae</taxon>
        <taxon>Photorhabdus</taxon>
    </lineage>
</organism>
<reference key="1">
    <citation type="journal article" date="2003" name="Nat. Biotechnol.">
        <title>The genome sequence of the entomopathogenic bacterium Photorhabdus luminescens.</title>
        <authorList>
            <person name="Duchaud E."/>
            <person name="Rusniok C."/>
            <person name="Frangeul L."/>
            <person name="Buchrieser C."/>
            <person name="Givaudan A."/>
            <person name="Taourit S."/>
            <person name="Bocs S."/>
            <person name="Boursaux-Eude C."/>
            <person name="Chandler M."/>
            <person name="Charles J.-F."/>
            <person name="Dassa E."/>
            <person name="Derose R."/>
            <person name="Derzelle S."/>
            <person name="Freyssinet G."/>
            <person name="Gaudriault S."/>
            <person name="Medigue C."/>
            <person name="Lanois A."/>
            <person name="Powell K."/>
            <person name="Siguier P."/>
            <person name="Vincent R."/>
            <person name="Wingate V."/>
            <person name="Zouine M."/>
            <person name="Glaser P."/>
            <person name="Boemare N."/>
            <person name="Danchin A."/>
            <person name="Kunst F."/>
        </authorList>
    </citation>
    <scope>NUCLEOTIDE SEQUENCE [LARGE SCALE GENOMIC DNA]</scope>
    <source>
        <strain>DSM 15139 / CIP 105565 / TT01</strain>
    </source>
</reference>
<gene>
    <name type="ordered locus">plu0566</name>
</gene>
<protein>
    <recommendedName>
        <fullName evidence="1">UPF0246 protein plu0566</fullName>
    </recommendedName>
</protein>